<feature type="chain" id="PRO_0000331972" description="Chaperonin GroEL 1">
    <location>
        <begin position="1"/>
        <end position="547"/>
    </location>
</feature>
<feature type="binding site" evidence="1">
    <location>
        <begin position="30"/>
        <end position="33"/>
    </location>
    <ligand>
        <name>ATP</name>
        <dbReference type="ChEBI" id="CHEBI:30616"/>
    </ligand>
</feature>
<feature type="binding site" evidence="1">
    <location>
        <position position="51"/>
    </location>
    <ligand>
        <name>ATP</name>
        <dbReference type="ChEBI" id="CHEBI:30616"/>
    </ligand>
</feature>
<feature type="binding site" evidence="1">
    <location>
        <begin position="87"/>
        <end position="91"/>
    </location>
    <ligand>
        <name>ATP</name>
        <dbReference type="ChEBI" id="CHEBI:30616"/>
    </ligand>
</feature>
<feature type="binding site" evidence="1">
    <location>
        <position position="415"/>
    </location>
    <ligand>
        <name>ATP</name>
        <dbReference type="ChEBI" id="CHEBI:30616"/>
    </ligand>
</feature>
<feature type="binding site" evidence="1">
    <location>
        <position position="495"/>
    </location>
    <ligand>
        <name>ATP</name>
        <dbReference type="ChEBI" id="CHEBI:30616"/>
    </ligand>
</feature>
<accession>A8ILV4</accession>
<organism>
    <name type="scientific">Azorhizobium caulinodans (strain ATCC 43989 / DSM 5975 / JCM 20966 / LMG 6465 / NBRC 14845 / NCIMB 13405 / ORS 571)</name>
    <dbReference type="NCBI Taxonomy" id="438753"/>
    <lineage>
        <taxon>Bacteria</taxon>
        <taxon>Pseudomonadati</taxon>
        <taxon>Pseudomonadota</taxon>
        <taxon>Alphaproteobacteria</taxon>
        <taxon>Hyphomicrobiales</taxon>
        <taxon>Xanthobacteraceae</taxon>
        <taxon>Azorhizobium</taxon>
    </lineage>
</organism>
<name>CH601_AZOC5</name>
<proteinExistence type="inferred from homology"/>
<dbReference type="EC" id="5.6.1.7" evidence="1"/>
<dbReference type="EMBL" id="AP009384">
    <property type="protein sequence ID" value="BAF86422.1"/>
    <property type="molecule type" value="Genomic_DNA"/>
</dbReference>
<dbReference type="SMR" id="A8ILV4"/>
<dbReference type="STRING" id="438753.AZC_0424"/>
<dbReference type="KEGG" id="azc:AZC_0424"/>
<dbReference type="eggNOG" id="COG0459">
    <property type="taxonomic scope" value="Bacteria"/>
</dbReference>
<dbReference type="HOGENOM" id="CLU_016503_3_0_5"/>
<dbReference type="Proteomes" id="UP000000270">
    <property type="component" value="Chromosome"/>
</dbReference>
<dbReference type="GO" id="GO:0005737">
    <property type="term" value="C:cytoplasm"/>
    <property type="evidence" value="ECO:0007669"/>
    <property type="project" value="UniProtKB-SubCell"/>
</dbReference>
<dbReference type="GO" id="GO:0005524">
    <property type="term" value="F:ATP binding"/>
    <property type="evidence" value="ECO:0007669"/>
    <property type="project" value="UniProtKB-UniRule"/>
</dbReference>
<dbReference type="GO" id="GO:0140662">
    <property type="term" value="F:ATP-dependent protein folding chaperone"/>
    <property type="evidence" value="ECO:0007669"/>
    <property type="project" value="InterPro"/>
</dbReference>
<dbReference type="GO" id="GO:0016853">
    <property type="term" value="F:isomerase activity"/>
    <property type="evidence" value="ECO:0007669"/>
    <property type="project" value="UniProtKB-KW"/>
</dbReference>
<dbReference type="GO" id="GO:0051082">
    <property type="term" value="F:unfolded protein binding"/>
    <property type="evidence" value="ECO:0007669"/>
    <property type="project" value="UniProtKB-UniRule"/>
</dbReference>
<dbReference type="GO" id="GO:0042026">
    <property type="term" value="P:protein refolding"/>
    <property type="evidence" value="ECO:0007669"/>
    <property type="project" value="UniProtKB-UniRule"/>
</dbReference>
<dbReference type="CDD" id="cd03344">
    <property type="entry name" value="GroEL"/>
    <property type="match status" value="1"/>
</dbReference>
<dbReference type="FunFam" id="1.10.560.10:FF:000001">
    <property type="entry name" value="60 kDa chaperonin"/>
    <property type="match status" value="1"/>
</dbReference>
<dbReference type="FunFam" id="3.50.7.10:FF:000001">
    <property type="entry name" value="60 kDa chaperonin"/>
    <property type="match status" value="1"/>
</dbReference>
<dbReference type="Gene3D" id="3.50.7.10">
    <property type="entry name" value="GroEL"/>
    <property type="match status" value="1"/>
</dbReference>
<dbReference type="Gene3D" id="1.10.560.10">
    <property type="entry name" value="GroEL-like equatorial domain"/>
    <property type="match status" value="1"/>
</dbReference>
<dbReference type="Gene3D" id="3.30.260.10">
    <property type="entry name" value="TCP-1-like chaperonin intermediate domain"/>
    <property type="match status" value="1"/>
</dbReference>
<dbReference type="HAMAP" id="MF_00600">
    <property type="entry name" value="CH60"/>
    <property type="match status" value="1"/>
</dbReference>
<dbReference type="InterPro" id="IPR018370">
    <property type="entry name" value="Chaperonin_Cpn60_CS"/>
</dbReference>
<dbReference type="InterPro" id="IPR001844">
    <property type="entry name" value="Cpn60/GroEL"/>
</dbReference>
<dbReference type="InterPro" id="IPR002423">
    <property type="entry name" value="Cpn60/GroEL/TCP-1"/>
</dbReference>
<dbReference type="InterPro" id="IPR027409">
    <property type="entry name" value="GroEL-like_apical_dom_sf"/>
</dbReference>
<dbReference type="InterPro" id="IPR027413">
    <property type="entry name" value="GROEL-like_equatorial_sf"/>
</dbReference>
<dbReference type="InterPro" id="IPR027410">
    <property type="entry name" value="TCP-1-like_intermed_sf"/>
</dbReference>
<dbReference type="NCBIfam" id="TIGR02348">
    <property type="entry name" value="GroEL"/>
    <property type="match status" value="1"/>
</dbReference>
<dbReference type="NCBIfam" id="NF000592">
    <property type="entry name" value="PRK00013.1"/>
    <property type="match status" value="1"/>
</dbReference>
<dbReference type="NCBIfam" id="NF009487">
    <property type="entry name" value="PRK12849.1"/>
    <property type="match status" value="1"/>
</dbReference>
<dbReference type="NCBIfam" id="NF009488">
    <property type="entry name" value="PRK12850.1"/>
    <property type="match status" value="1"/>
</dbReference>
<dbReference type="NCBIfam" id="NF009489">
    <property type="entry name" value="PRK12851.1"/>
    <property type="match status" value="1"/>
</dbReference>
<dbReference type="PANTHER" id="PTHR45633">
    <property type="entry name" value="60 KDA HEAT SHOCK PROTEIN, MITOCHONDRIAL"/>
    <property type="match status" value="1"/>
</dbReference>
<dbReference type="Pfam" id="PF00118">
    <property type="entry name" value="Cpn60_TCP1"/>
    <property type="match status" value="1"/>
</dbReference>
<dbReference type="PRINTS" id="PR00298">
    <property type="entry name" value="CHAPERONIN60"/>
</dbReference>
<dbReference type="SUPFAM" id="SSF52029">
    <property type="entry name" value="GroEL apical domain-like"/>
    <property type="match status" value="1"/>
</dbReference>
<dbReference type="SUPFAM" id="SSF48592">
    <property type="entry name" value="GroEL equatorial domain-like"/>
    <property type="match status" value="1"/>
</dbReference>
<dbReference type="SUPFAM" id="SSF54849">
    <property type="entry name" value="GroEL-intermediate domain like"/>
    <property type="match status" value="1"/>
</dbReference>
<dbReference type="PROSITE" id="PS00296">
    <property type="entry name" value="CHAPERONINS_CPN60"/>
    <property type="match status" value="1"/>
</dbReference>
<reference key="1">
    <citation type="submission" date="2007-04" db="EMBL/GenBank/DDBJ databases">
        <title>Complete genome sequence of the nitrogen-fixing bacterium Azorhizobium caulinodans ORS571.</title>
        <authorList>
            <person name="Lee K.B."/>
            <person name="Backer P.D."/>
            <person name="Aono T."/>
            <person name="Liu C.T."/>
            <person name="Suzuki S."/>
            <person name="Suzuki T."/>
            <person name="Kaneko T."/>
            <person name="Yamada M."/>
            <person name="Tabata S."/>
            <person name="Kupfer D.M."/>
            <person name="Najar F.Z."/>
            <person name="Wiley G.B."/>
            <person name="Roe B."/>
            <person name="Binnewies T."/>
            <person name="Ussery D."/>
            <person name="Vereecke D."/>
            <person name="Gevers D."/>
            <person name="Holsters M."/>
            <person name="Oyaizu H."/>
        </authorList>
    </citation>
    <scope>NUCLEOTIDE SEQUENCE [LARGE SCALE GENOMIC DNA]</scope>
    <source>
        <strain>ATCC 43989 / DSM 5975 / JCM 20966 / LMG 6465 / NBRC 14845 / NCIMB 13405 / ORS 571</strain>
    </source>
</reference>
<gene>
    <name evidence="1" type="primary">groEL1</name>
    <name evidence="1" type="synonym">groL1</name>
    <name type="ordered locus">AZC_0424</name>
</gene>
<protein>
    <recommendedName>
        <fullName evidence="1">Chaperonin GroEL 1</fullName>
        <ecNumber evidence="1">5.6.1.7</ecNumber>
    </recommendedName>
    <alternativeName>
        <fullName evidence="1">60 kDa chaperonin 1</fullName>
    </alternativeName>
    <alternativeName>
        <fullName evidence="1">Chaperonin-60 1</fullName>
        <shortName evidence="1">Cpn60 1</shortName>
    </alternativeName>
</protein>
<sequence length="547" mass="57254">MAAKEVKFAGEAREKMLRGVDILANAVKVTLGPKGRNVVIEKSFGAPRITKDGVSVAKEIELEDKFENLGAQLVREVASKTNDLAGDGTTTATVLAQAIVKEGAKAVAAGMNPMDLKRGIDLATAAAVKDIQARAKKVSSSAEVAQVGTISANGDSSIGEMIAGAMQKVGNEGVITVEEAKTAETELEVVEGMQFDRGYLSPYFITNAEKMIADLEDPFLLIFEKKLSGLQPILPVLEAVVQSGKPLVIVAEDVEGEALATLVVNKLRGGLKVAAVKAPGFGDRRKAMLEDIAILTGGQVISEDLGIKLENVTLAQLGRAKKVILEKEKTTIVDGVGEKAEIEARVAQIKAQIEETSSDYDREKLQERLAKLAGGVAVIRVGGSTEVEVKEKKDRVDDALNATRAAVEEGIVPGGGVALLRAKKAVEALSSENPDIAAGIKIVLRALEAPIRQIAENSGVEGSIVVGKVLESEGNFGFNAQTEQYVDLVAEGVVDPAKVVRTALQDASSVASLLVTTEALIAELPKKDAGMPAMPGGGMGGMGGMDF</sequence>
<evidence type="ECO:0000255" key="1">
    <source>
        <dbReference type="HAMAP-Rule" id="MF_00600"/>
    </source>
</evidence>
<comment type="function">
    <text evidence="1">Together with its co-chaperonin GroES, plays an essential role in assisting protein folding. The GroEL-GroES system forms a nano-cage that allows encapsulation of the non-native substrate proteins and provides a physical environment optimized to promote and accelerate protein folding.</text>
</comment>
<comment type="catalytic activity">
    <reaction evidence="1">
        <text>ATP + H2O + a folded polypeptide = ADP + phosphate + an unfolded polypeptide.</text>
        <dbReference type="EC" id="5.6.1.7"/>
    </reaction>
</comment>
<comment type="subunit">
    <text evidence="1">Forms a cylinder of 14 subunits composed of two heptameric rings stacked back-to-back. Interacts with the co-chaperonin GroES.</text>
</comment>
<comment type="subcellular location">
    <subcellularLocation>
        <location evidence="1">Cytoplasm</location>
    </subcellularLocation>
</comment>
<comment type="similarity">
    <text evidence="1">Belongs to the chaperonin (HSP60) family.</text>
</comment>
<keyword id="KW-0067">ATP-binding</keyword>
<keyword id="KW-0143">Chaperone</keyword>
<keyword id="KW-0963">Cytoplasm</keyword>
<keyword id="KW-0413">Isomerase</keyword>
<keyword id="KW-0547">Nucleotide-binding</keyword>
<keyword id="KW-1185">Reference proteome</keyword>